<proteinExistence type="evidence at transcript level"/>
<reference key="1">
    <citation type="submission" date="2001-06" db="EMBL/GenBank/DDBJ databases">
        <title>Ras-related small GTPase Rab21 from the marine sponge Geodia cydonium.</title>
        <authorList>
            <person name="Gamulin V."/>
            <person name="Krasko A."/>
            <person name="Mueller W.E.G."/>
        </authorList>
    </citation>
    <scope>NUCLEOTIDE SEQUENCE [MRNA]</scope>
</reference>
<sequence length="229" mass="25345">MASPSDASRRRQATVKAKVVLLGEGAVGKTSLVLRYSENKFNDKHEQTLQASFVEKRLNIGGKRIQLAIWDTAGQERYHALGPIYYRDSQGAIIVYDITDEDSFHKARNWIKELKRMLGDKVTLCIVGNKIDLDRQRTVSEKDALEYAESVGAKHYYTSAKQSKGVAELFLDLAKRILEANPPSSSTPPESQRGAPSSHPPSQPRQRSTLIVTDDSEQPSPKQGGGCCS</sequence>
<gene>
    <name type="primary">RAB21</name>
</gene>
<dbReference type="EMBL" id="AJ315669">
    <property type="protein sequence ID" value="CAC85935.1"/>
    <property type="molecule type" value="mRNA"/>
</dbReference>
<dbReference type="SMR" id="Q8WQ53"/>
<dbReference type="GO" id="GO:0000139">
    <property type="term" value="C:Golgi membrane"/>
    <property type="evidence" value="ECO:0007669"/>
    <property type="project" value="UniProtKB-SubCell"/>
</dbReference>
<dbReference type="GO" id="GO:0005525">
    <property type="term" value="F:GTP binding"/>
    <property type="evidence" value="ECO:0007669"/>
    <property type="project" value="UniProtKB-KW"/>
</dbReference>
<dbReference type="GO" id="GO:0003924">
    <property type="term" value="F:GTPase activity"/>
    <property type="evidence" value="ECO:0007669"/>
    <property type="project" value="InterPro"/>
</dbReference>
<dbReference type="GO" id="GO:0015031">
    <property type="term" value="P:protein transport"/>
    <property type="evidence" value="ECO:0007669"/>
    <property type="project" value="UniProtKB-KW"/>
</dbReference>
<dbReference type="GO" id="GO:0032482">
    <property type="term" value="P:Rab protein signal transduction"/>
    <property type="evidence" value="ECO:0007669"/>
    <property type="project" value="InterPro"/>
</dbReference>
<dbReference type="CDD" id="cd04123">
    <property type="entry name" value="Rab21"/>
    <property type="match status" value="1"/>
</dbReference>
<dbReference type="FunFam" id="3.40.50.300:FF:000550">
    <property type="entry name" value="ras-related protein Rab-21"/>
    <property type="match status" value="1"/>
</dbReference>
<dbReference type="Gene3D" id="3.40.50.300">
    <property type="entry name" value="P-loop containing nucleotide triphosphate hydrolases"/>
    <property type="match status" value="1"/>
</dbReference>
<dbReference type="InterPro" id="IPR027417">
    <property type="entry name" value="P-loop_NTPase"/>
</dbReference>
<dbReference type="InterPro" id="IPR041833">
    <property type="entry name" value="Rab21"/>
</dbReference>
<dbReference type="InterPro" id="IPR005225">
    <property type="entry name" value="Small_GTP-bd"/>
</dbReference>
<dbReference type="InterPro" id="IPR001806">
    <property type="entry name" value="Small_GTPase"/>
</dbReference>
<dbReference type="NCBIfam" id="TIGR00231">
    <property type="entry name" value="small_GTP"/>
    <property type="match status" value="1"/>
</dbReference>
<dbReference type="PANTHER" id="PTHR47978">
    <property type="match status" value="1"/>
</dbReference>
<dbReference type="Pfam" id="PF00071">
    <property type="entry name" value="Ras"/>
    <property type="match status" value="1"/>
</dbReference>
<dbReference type="PRINTS" id="PR00449">
    <property type="entry name" value="RASTRNSFRMNG"/>
</dbReference>
<dbReference type="SMART" id="SM00175">
    <property type="entry name" value="RAB"/>
    <property type="match status" value="1"/>
</dbReference>
<dbReference type="SMART" id="SM00176">
    <property type="entry name" value="RAN"/>
    <property type="match status" value="1"/>
</dbReference>
<dbReference type="SMART" id="SM00173">
    <property type="entry name" value="RAS"/>
    <property type="match status" value="1"/>
</dbReference>
<dbReference type="SMART" id="SM00174">
    <property type="entry name" value="RHO"/>
    <property type="match status" value="1"/>
</dbReference>
<dbReference type="SUPFAM" id="SSF52540">
    <property type="entry name" value="P-loop containing nucleoside triphosphate hydrolases"/>
    <property type="match status" value="1"/>
</dbReference>
<dbReference type="PROSITE" id="PS51419">
    <property type="entry name" value="RAB"/>
    <property type="match status" value="1"/>
</dbReference>
<name>RAB21_GEOCY</name>
<feature type="chain" id="PRO_0000121207" description="Ras-related protein Rab-21">
    <location>
        <begin position="1"/>
        <end position="229"/>
    </location>
</feature>
<feature type="region of interest" description="Disordered" evidence="2">
    <location>
        <begin position="179"/>
        <end position="229"/>
    </location>
</feature>
<feature type="short sequence motif" description="Effector region" evidence="1">
    <location>
        <begin position="45"/>
        <end position="53"/>
    </location>
</feature>
<feature type="binding site" evidence="1">
    <location>
        <begin position="23"/>
        <end position="30"/>
    </location>
    <ligand>
        <name>GTP</name>
        <dbReference type="ChEBI" id="CHEBI:37565"/>
    </ligand>
</feature>
<feature type="binding site" evidence="1">
    <location>
        <begin position="71"/>
        <end position="75"/>
    </location>
    <ligand>
        <name>GTP</name>
        <dbReference type="ChEBI" id="CHEBI:37565"/>
    </ligand>
</feature>
<feature type="binding site" evidence="1">
    <location>
        <begin position="129"/>
        <end position="132"/>
    </location>
    <ligand>
        <name>GTP</name>
        <dbReference type="ChEBI" id="CHEBI:37565"/>
    </ligand>
</feature>
<feature type="lipid moiety-binding region" description="S-geranylgeranyl cysteine" evidence="1">
    <location>
        <position position="227"/>
    </location>
</feature>
<feature type="lipid moiety-binding region" description="S-geranylgeranyl cysteine" evidence="1">
    <location>
        <position position="228"/>
    </location>
</feature>
<evidence type="ECO:0000250" key="1"/>
<evidence type="ECO:0000256" key="2">
    <source>
        <dbReference type="SAM" id="MobiDB-lite"/>
    </source>
</evidence>
<evidence type="ECO:0000305" key="3"/>
<keyword id="KW-0333">Golgi apparatus</keyword>
<keyword id="KW-0342">GTP-binding</keyword>
<keyword id="KW-0449">Lipoprotein</keyword>
<keyword id="KW-0472">Membrane</keyword>
<keyword id="KW-0547">Nucleotide-binding</keyword>
<keyword id="KW-0636">Prenylation</keyword>
<keyword id="KW-0653">Protein transport</keyword>
<keyword id="KW-0813">Transport</keyword>
<organism>
    <name type="scientific">Geodia cydonium</name>
    <name type="common">Sponge</name>
    <dbReference type="NCBI Taxonomy" id="6047"/>
    <lineage>
        <taxon>Eukaryota</taxon>
        <taxon>Metazoa</taxon>
        <taxon>Porifera</taxon>
        <taxon>Demospongiae</taxon>
        <taxon>Heteroscleromorpha</taxon>
        <taxon>Tetractinellida</taxon>
        <taxon>Astrophorina</taxon>
        <taxon>Geodiidae</taxon>
        <taxon>Geodia</taxon>
    </lineage>
</organism>
<comment type="subcellular location">
    <subcellularLocation>
        <location evidence="1">Golgi apparatus membrane</location>
        <topology evidence="1">Lipid-anchor</topology>
    </subcellularLocation>
</comment>
<comment type="similarity">
    <text evidence="3">Belongs to the small GTPase superfamily. Rab family.</text>
</comment>
<protein>
    <recommendedName>
        <fullName>Ras-related protein Rab-21</fullName>
    </recommendedName>
</protein>
<accession>Q8WQ53</accession>